<sequence length="365" mass="41081">MKQEKERILKLVEEGKLTAQEALTLIEKLDSDYKEKEEKITALSVHVHDEEEPFTTAKKESGKPSLGAKLFDWIDSAVKKVKEVDLDLNFGHAYDVQHIFQFKDTDFSSVELQIANGSVNIVPWEDDDIRAECQAKVYRADSQDAARHAFLQHIECEIKGNKFFIRTEKKTMKTNVTLYIPQKEYDKIRVKLFNGPVRGEHLHVKEFSAKTTNGVLSFSYLTAEKAIAETANGQIKLASHSCGTIEAETINGLIDLRGKSESIDVQSFNGNIAINVTESDCRSIYAKTTTGNVELAIPDDLAVKAELKSNLGTLSHELMDVEMLKEKNDTIQKEMMFTSNQAHDQNITVFSESLTGAIKLKYSQR</sequence>
<keyword id="KW-0175">Coiled coil</keyword>
<keyword id="KW-1185">Reference proteome</keyword>
<feature type="chain" id="PRO_0000389642" description="Uncharacterized protein YvlB">
    <location>
        <begin position="1"/>
        <end position="365"/>
    </location>
</feature>
<feature type="coiled-coil region" evidence="1">
    <location>
        <begin position="18"/>
        <end position="46"/>
    </location>
</feature>
<dbReference type="EMBL" id="AF017113">
    <property type="protein sequence ID" value="AAC67274.1"/>
    <property type="molecule type" value="Genomic_DNA"/>
</dbReference>
<dbReference type="EMBL" id="AL009126">
    <property type="protein sequence ID" value="CAB15517.1"/>
    <property type="molecule type" value="Genomic_DNA"/>
</dbReference>
<dbReference type="PIR" id="D70043">
    <property type="entry name" value="D70043"/>
</dbReference>
<dbReference type="RefSeq" id="NP_391392.1">
    <property type="nucleotide sequence ID" value="NC_000964.3"/>
</dbReference>
<dbReference type="RefSeq" id="WP_003228061.1">
    <property type="nucleotide sequence ID" value="NZ_OZ025638.1"/>
</dbReference>
<dbReference type="SMR" id="O34628"/>
<dbReference type="FunCoup" id="O34628">
    <property type="interactions" value="8"/>
</dbReference>
<dbReference type="STRING" id="224308.BSU35120"/>
<dbReference type="jPOST" id="O34628"/>
<dbReference type="PaxDb" id="224308-BSU35120"/>
<dbReference type="DNASU" id="936656"/>
<dbReference type="EnsemblBacteria" id="CAB15517">
    <property type="protein sequence ID" value="CAB15517"/>
    <property type="gene ID" value="BSU_35120"/>
</dbReference>
<dbReference type="GeneID" id="936656"/>
<dbReference type="KEGG" id="bsu:BSU35120"/>
<dbReference type="PATRIC" id="fig|224308.179.peg.3802"/>
<dbReference type="eggNOG" id="COG3595">
    <property type="taxonomic scope" value="Bacteria"/>
</dbReference>
<dbReference type="InParanoid" id="O34628"/>
<dbReference type="OrthoDB" id="2240743at2"/>
<dbReference type="PhylomeDB" id="O34628"/>
<dbReference type="BioCyc" id="BSUB:BSU35120-MONOMER"/>
<dbReference type="Proteomes" id="UP000001570">
    <property type="component" value="Chromosome"/>
</dbReference>
<dbReference type="GO" id="GO:0005886">
    <property type="term" value="C:plasma membrane"/>
    <property type="evidence" value="ECO:0000318"/>
    <property type="project" value="GO_Central"/>
</dbReference>
<dbReference type="Gene3D" id="2.160.20.120">
    <property type="match status" value="1"/>
</dbReference>
<dbReference type="InterPro" id="IPR052027">
    <property type="entry name" value="PspC"/>
</dbReference>
<dbReference type="InterPro" id="IPR025164">
    <property type="entry name" value="Toastrack_DUF4097"/>
</dbReference>
<dbReference type="InterPro" id="IPR016599">
    <property type="entry name" value="UCP012569"/>
</dbReference>
<dbReference type="InterPro" id="IPR053959">
    <property type="entry name" value="YvlB_N"/>
</dbReference>
<dbReference type="PANTHER" id="PTHR33885:SF4">
    <property type="entry name" value="LMO2487 PROTEIN"/>
    <property type="match status" value="1"/>
</dbReference>
<dbReference type="PANTHER" id="PTHR33885">
    <property type="entry name" value="PHAGE SHOCK PROTEIN C"/>
    <property type="match status" value="1"/>
</dbReference>
<dbReference type="Pfam" id="PF13349">
    <property type="entry name" value="DUF4097"/>
    <property type="match status" value="1"/>
</dbReference>
<dbReference type="Pfam" id="PF22746">
    <property type="entry name" value="SHOCT-like_DUF2089-C"/>
    <property type="match status" value="1"/>
</dbReference>
<dbReference type="PIRSF" id="PIRSF012569">
    <property type="entry name" value="UCP012569"/>
    <property type="match status" value="1"/>
</dbReference>
<reference key="1">
    <citation type="submission" date="1997-11" db="EMBL/GenBank/DDBJ databases">
        <title>Nucleotide sequence of the 300-304 chromosomal segment of Bacillus subtilis.</title>
        <authorList>
            <person name="Lazarevic V."/>
            <person name="Soldo B."/>
            <person name="Rivolta C."/>
            <person name="Reynolds S."/>
            <person name="Mauel C."/>
            <person name="Karamata D."/>
        </authorList>
    </citation>
    <scope>NUCLEOTIDE SEQUENCE [GENOMIC DNA]</scope>
</reference>
<reference key="2">
    <citation type="journal article" date="1997" name="Nature">
        <title>The complete genome sequence of the Gram-positive bacterium Bacillus subtilis.</title>
        <authorList>
            <person name="Kunst F."/>
            <person name="Ogasawara N."/>
            <person name="Moszer I."/>
            <person name="Albertini A.M."/>
            <person name="Alloni G."/>
            <person name="Azevedo V."/>
            <person name="Bertero M.G."/>
            <person name="Bessieres P."/>
            <person name="Bolotin A."/>
            <person name="Borchert S."/>
            <person name="Borriss R."/>
            <person name="Boursier L."/>
            <person name="Brans A."/>
            <person name="Braun M."/>
            <person name="Brignell S.C."/>
            <person name="Bron S."/>
            <person name="Brouillet S."/>
            <person name="Bruschi C.V."/>
            <person name="Caldwell B."/>
            <person name="Capuano V."/>
            <person name="Carter N.M."/>
            <person name="Choi S.-K."/>
            <person name="Codani J.-J."/>
            <person name="Connerton I.F."/>
            <person name="Cummings N.J."/>
            <person name="Daniel R.A."/>
            <person name="Denizot F."/>
            <person name="Devine K.M."/>
            <person name="Duesterhoeft A."/>
            <person name="Ehrlich S.D."/>
            <person name="Emmerson P.T."/>
            <person name="Entian K.-D."/>
            <person name="Errington J."/>
            <person name="Fabret C."/>
            <person name="Ferrari E."/>
            <person name="Foulger D."/>
            <person name="Fritz C."/>
            <person name="Fujita M."/>
            <person name="Fujita Y."/>
            <person name="Fuma S."/>
            <person name="Galizzi A."/>
            <person name="Galleron N."/>
            <person name="Ghim S.-Y."/>
            <person name="Glaser P."/>
            <person name="Goffeau A."/>
            <person name="Golightly E.J."/>
            <person name="Grandi G."/>
            <person name="Guiseppi G."/>
            <person name="Guy B.J."/>
            <person name="Haga K."/>
            <person name="Haiech J."/>
            <person name="Harwood C.R."/>
            <person name="Henaut A."/>
            <person name="Hilbert H."/>
            <person name="Holsappel S."/>
            <person name="Hosono S."/>
            <person name="Hullo M.-F."/>
            <person name="Itaya M."/>
            <person name="Jones L.-M."/>
            <person name="Joris B."/>
            <person name="Karamata D."/>
            <person name="Kasahara Y."/>
            <person name="Klaerr-Blanchard M."/>
            <person name="Klein C."/>
            <person name="Kobayashi Y."/>
            <person name="Koetter P."/>
            <person name="Koningstein G."/>
            <person name="Krogh S."/>
            <person name="Kumano M."/>
            <person name="Kurita K."/>
            <person name="Lapidus A."/>
            <person name="Lardinois S."/>
            <person name="Lauber J."/>
            <person name="Lazarevic V."/>
            <person name="Lee S.-M."/>
            <person name="Levine A."/>
            <person name="Liu H."/>
            <person name="Masuda S."/>
            <person name="Mauel C."/>
            <person name="Medigue C."/>
            <person name="Medina N."/>
            <person name="Mellado R.P."/>
            <person name="Mizuno M."/>
            <person name="Moestl D."/>
            <person name="Nakai S."/>
            <person name="Noback M."/>
            <person name="Noone D."/>
            <person name="O'Reilly M."/>
            <person name="Ogawa K."/>
            <person name="Ogiwara A."/>
            <person name="Oudega B."/>
            <person name="Park S.-H."/>
            <person name="Parro V."/>
            <person name="Pohl T.M."/>
            <person name="Portetelle D."/>
            <person name="Porwollik S."/>
            <person name="Prescott A.M."/>
            <person name="Presecan E."/>
            <person name="Pujic P."/>
            <person name="Purnelle B."/>
            <person name="Rapoport G."/>
            <person name="Rey M."/>
            <person name="Reynolds S."/>
            <person name="Rieger M."/>
            <person name="Rivolta C."/>
            <person name="Rocha E."/>
            <person name="Roche B."/>
            <person name="Rose M."/>
            <person name="Sadaie Y."/>
            <person name="Sato T."/>
            <person name="Scanlan E."/>
            <person name="Schleich S."/>
            <person name="Schroeter R."/>
            <person name="Scoffone F."/>
            <person name="Sekiguchi J."/>
            <person name="Sekowska A."/>
            <person name="Seror S.J."/>
            <person name="Serror P."/>
            <person name="Shin B.-S."/>
            <person name="Soldo B."/>
            <person name="Sorokin A."/>
            <person name="Tacconi E."/>
            <person name="Takagi T."/>
            <person name="Takahashi H."/>
            <person name="Takemaru K."/>
            <person name="Takeuchi M."/>
            <person name="Tamakoshi A."/>
            <person name="Tanaka T."/>
            <person name="Terpstra P."/>
            <person name="Tognoni A."/>
            <person name="Tosato V."/>
            <person name="Uchiyama S."/>
            <person name="Vandenbol M."/>
            <person name="Vannier F."/>
            <person name="Vassarotti A."/>
            <person name="Viari A."/>
            <person name="Wambutt R."/>
            <person name="Wedler E."/>
            <person name="Wedler H."/>
            <person name="Weitzenegger T."/>
            <person name="Winters P."/>
            <person name="Wipat A."/>
            <person name="Yamamoto H."/>
            <person name="Yamane K."/>
            <person name="Yasumoto K."/>
            <person name="Yata K."/>
            <person name="Yoshida K."/>
            <person name="Yoshikawa H.-F."/>
            <person name="Zumstein E."/>
            <person name="Yoshikawa H."/>
            <person name="Danchin A."/>
        </authorList>
    </citation>
    <scope>NUCLEOTIDE SEQUENCE [LARGE SCALE GENOMIC DNA]</scope>
    <source>
        <strain>168</strain>
    </source>
</reference>
<name>YVLB_BACSU</name>
<accession>O34628</accession>
<accession>Q795E2</accession>
<organism>
    <name type="scientific">Bacillus subtilis (strain 168)</name>
    <dbReference type="NCBI Taxonomy" id="224308"/>
    <lineage>
        <taxon>Bacteria</taxon>
        <taxon>Bacillati</taxon>
        <taxon>Bacillota</taxon>
        <taxon>Bacilli</taxon>
        <taxon>Bacillales</taxon>
        <taxon>Bacillaceae</taxon>
        <taxon>Bacillus</taxon>
    </lineage>
</organism>
<protein>
    <recommendedName>
        <fullName>Uncharacterized protein YvlB</fullName>
    </recommendedName>
</protein>
<evidence type="ECO:0000255" key="1"/>
<gene>
    <name type="primary">yvlB</name>
    <name type="ordered locus">BSU35120</name>
</gene>
<proteinExistence type="predicted"/>